<gene>
    <name evidence="8" type="primary">DJ-1alpha</name>
    <name evidence="8" type="ORF">CG6646</name>
</gene>
<feature type="chain" id="PRO_0000439171" description="Protein DJ-1alpha">
    <location>
        <begin position="1"/>
        <end position="217"/>
    </location>
</feature>
<feature type="active site" description="Nucleophile" evidence="1">
    <location>
        <position position="133"/>
    </location>
</feature>
<feature type="modified residue" description="Cysteine sulfinic acid (-SO2H); alternate" evidence="2">
    <location>
        <position position="133"/>
    </location>
</feature>
<protein>
    <recommendedName>
        <fullName evidence="7">Protein DJ-1alpha</fullName>
    </recommendedName>
</protein>
<accession>A1Z9J4</accession>
<sequence>MLSVLRKSFPNGVTHAHRVIRCKSNQDKCAKNALIILAPGAEEMEFTISADVLRRGKILVTVAGLHDCEPVKCSRSVVIVPDTSLEEAVTRGDYDVVVLPGGLAGNKALMNSSAVGDVLRCQESKGGLIAAICAAPTALAKHGIGKGKSITSHPDMKPQLKELYCYIDDKTVVQDGNIITSRGPGTTFDFALKITEQLVGAEVAKEVAKAMLWTYKP</sequence>
<reference key="1">
    <citation type="journal article" date="2000" name="Science">
        <title>The genome sequence of Drosophila melanogaster.</title>
        <authorList>
            <person name="Adams M.D."/>
            <person name="Celniker S.E."/>
            <person name="Holt R.A."/>
            <person name="Evans C.A."/>
            <person name="Gocayne J.D."/>
            <person name="Amanatides P.G."/>
            <person name="Scherer S.E."/>
            <person name="Li P.W."/>
            <person name="Hoskins R.A."/>
            <person name="Galle R.F."/>
            <person name="George R.A."/>
            <person name="Lewis S.E."/>
            <person name="Richards S."/>
            <person name="Ashburner M."/>
            <person name="Henderson S.N."/>
            <person name="Sutton G.G."/>
            <person name="Wortman J.R."/>
            <person name="Yandell M.D."/>
            <person name="Zhang Q."/>
            <person name="Chen L.X."/>
            <person name="Brandon R.C."/>
            <person name="Rogers Y.-H.C."/>
            <person name="Blazej R.G."/>
            <person name="Champe M."/>
            <person name="Pfeiffer B.D."/>
            <person name="Wan K.H."/>
            <person name="Doyle C."/>
            <person name="Baxter E.G."/>
            <person name="Helt G."/>
            <person name="Nelson C.R."/>
            <person name="Miklos G.L.G."/>
            <person name="Abril J.F."/>
            <person name="Agbayani A."/>
            <person name="An H.-J."/>
            <person name="Andrews-Pfannkoch C."/>
            <person name="Baldwin D."/>
            <person name="Ballew R.M."/>
            <person name="Basu A."/>
            <person name="Baxendale J."/>
            <person name="Bayraktaroglu L."/>
            <person name="Beasley E.M."/>
            <person name="Beeson K.Y."/>
            <person name="Benos P.V."/>
            <person name="Berman B.P."/>
            <person name="Bhandari D."/>
            <person name="Bolshakov S."/>
            <person name="Borkova D."/>
            <person name="Botchan M.R."/>
            <person name="Bouck J."/>
            <person name="Brokstein P."/>
            <person name="Brottier P."/>
            <person name="Burtis K.C."/>
            <person name="Busam D.A."/>
            <person name="Butler H."/>
            <person name="Cadieu E."/>
            <person name="Center A."/>
            <person name="Chandra I."/>
            <person name="Cherry J.M."/>
            <person name="Cawley S."/>
            <person name="Dahlke C."/>
            <person name="Davenport L.B."/>
            <person name="Davies P."/>
            <person name="de Pablos B."/>
            <person name="Delcher A."/>
            <person name="Deng Z."/>
            <person name="Mays A.D."/>
            <person name="Dew I."/>
            <person name="Dietz S.M."/>
            <person name="Dodson K."/>
            <person name="Doup L.E."/>
            <person name="Downes M."/>
            <person name="Dugan-Rocha S."/>
            <person name="Dunkov B.C."/>
            <person name="Dunn P."/>
            <person name="Durbin K.J."/>
            <person name="Evangelista C.C."/>
            <person name="Ferraz C."/>
            <person name="Ferriera S."/>
            <person name="Fleischmann W."/>
            <person name="Fosler C."/>
            <person name="Gabrielian A.E."/>
            <person name="Garg N.S."/>
            <person name="Gelbart W.M."/>
            <person name="Glasser K."/>
            <person name="Glodek A."/>
            <person name="Gong F."/>
            <person name="Gorrell J.H."/>
            <person name="Gu Z."/>
            <person name="Guan P."/>
            <person name="Harris M."/>
            <person name="Harris N.L."/>
            <person name="Harvey D.A."/>
            <person name="Heiman T.J."/>
            <person name="Hernandez J.R."/>
            <person name="Houck J."/>
            <person name="Hostin D."/>
            <person name="Houston K.A."/>
            <person name="Howland T.J."/>
            <person name="Wei M.-H."/>
            <person name="Ibegwam C."/>
            <person name="Jalali M."/>
            <person name="Kalush F."/>
            <person name="Karpen G.H."/>
            <person name="Ke Z."/>
            <person name="Kennison J.A."/>
            <person name="Ketchum K.A."/>
            <person name="Kimmel B.E."/>
            <person name="Kodira C.D."/>
            <person name="Kraft C.L."/>
            <person name="Kravitz S."/>
            <person name="Kulp D."/>
            <person name="Lai Z."/>
            <person name="Lasko P."/>
            <person name="Lei Y."/>
            <person name="Levitsky A.A."/>
            <person name="Li J.H."/>
            <person name="Li Z."/>
            <person name="Liang Y."/>
            <person name="Lin X."/>
            <person name="Liu X."/>
            <person name="Mattei B."/>
            <person name="McIntosh T.C."/>
            <person name="McLeod M.P."/>
            <person name="McPherson D."/>
            <person name="Merkulov G."/>
            <person name="Milshina N.V."/>
            <person name="Mobarry C."/>
            <person name="Morris J."/>
            <person name="Moshrefi A."/>
            <person name="Mount S.M."/>
            <person name="Moy M."/>
            <person name="Murphy B."/>
            <person name="Murphy L."/>
            <person name="Muzny D.M."/>
            <person name="Nelson D.L."/>
            <person name="Nelson D.R."/>
            <person name="Nelson K.A."/>
            <person name="Nixon K."/>
            <person name="Nusskern D.R."/>
            <person name="Pacleb J.M."/>
            <person name="Palazzolo M."/>
            <person name="Pittman G.S."/>
            <person name="Pan S."/>
            <person name="Pollard J."/>
            <person name="Puri V."/>
            <person name="Reese M.G."/>
            <person name="Reinert K."/>
            <person name="Remington K."/>
            <person name="Saunders R.D.C."/>
            <person name="Scheeler F."/>
            <person name="Shen H."/>
            <person name="Shue B.C."/>
            <person name="Siden-Kiamos I."/>
            <person name="Simpson M."/>
            <person name="Skupski M.P."/>
            <person name="Smith T.J."/>
            <person name="Spier E."/>
            <person name="Spradling A.C."/>
            <person name="Stapleton M."/>
            <person name="Strong R."/>
            <person name="Sun E."/>
            <person name="Svirskas R."/>
            <person name="Tector C."/>
            <person name="Turner R."/>
            <person name="Venter E."/>
            <person name="Wang A.H."/>
            <person name="Wang X."/>
            <person name="Wang Z.-Y."/>
            <person name="Wassarman D.A."/>
            <person name="Weinstock G.M."/>
            <person name="Weissenbach J."/>
            <person name="Williams S.M."/>
            <person name="Woodage T."/>
            <person name="Worley K.C."/>
            <person name="Wu D."/>
            <person name="Yang S."/>
            <person name="Yao Q.A."/>
            <person name="Ye J."/>
            <person name="Yeh R.-F."/>
            <person name="Zaveri J.S."/>
            <person name="Zhan M."/>
            <person name="Zhang G."/>
            <person name="Zhao Q."/>
            <person name="Zheng L."/>
            <person name="Zheng X.H."/>
            <person name="Zhong F.N."/>
            <person name="Zhong W."/>
            <person name="Zhou X."/>
            <person name="Zhu S.C."/>
            <person name="Zhu X."/>
            <person name="Smith H.O."/>
            <person name="Gibbs R.A."/>
            <person name="Myers E.W."/>
            <person name="Rubin G.M."/>
            <person name="Venter J.C."/>
        </authorList>
    </citation>
    <scope>NUCLEOTIDE SEQUENCE [LARGE SCALE GENOMIC DNA]</scope>
    <source>
        <strain>Berkeley</strain>
    </source>
</reference>
<reference key="2">
    <citation type="journal article" date="2002" name="Genome Biol.">
        <title>Annotation of the Drosophila melanogaster euchromatic genome: a systematic review.</title>
        <authorList>
            <person name="Misra S."/>
            <person name="Crosby M.A."/>
            <person name="Mungall C.J."/>
            <person name="Matthews B.B."/>
            <person name="Campbell K.S."/>
            <person name="Hradecky P."/>
            <person name="Huang Y."/>
            <person name="Kaminker J.S."/>
            <person name="Millburn G.H."/>
            <person name="Prochnik S.E."/>
            <person name="Smith C.D."/>
            <person name="Tupy J.L."/>
            <person name="Whitfield E.J."/>
            <person name="Bayraktaroglu L."/>
            <person name="Berman B.P."/>
            <person name="Bettencourt B.R."/>
            <person name="Celniker S.E."/>
            <person name="de Grey A.D.N.J."/>
            <person name="Drysdale R.A."/>
            <person name="Harris N.L."/>
            <person name="Richter J."/>
            <person name="Russo S."/>
            <person name="Schroeder A.J."/>
            <person name="Shu S.Q."/>
            <person name="Stapleton M."/>
            <person name="Yamada C."/>
            <person name="Ashburner M."/>
            <person name="Gelbart W.M."/>
            <person name="Rubin G.M."/>
            <person name="Lewis S.E."/>
        </authorList>
    </citation>
    <scope>GENOME REANNOTATION</scope>
    <source>
        <strain>Berkeley</strain>
    </source>
</reference>
<reference key="3">
    <citation type="journal article" date="2005" name="Curr. Biol.">
        <title>Drosophila DJ-1 mutants are selectively sensitive to environmental toxins associated with Parkinson's disease.</title>
        <authorList>
            <person name="Meulener M."/>
            <person name="Whitworth A.J."/>
            <person name="Armstrong-Gold C.E."/>
            <person name="Rizzu P."/>
            <person name="Heutink P."/>
            <person name="Wes P.D."/>
            <person name="Pallanck L.J."/>
            <person name="Bonini N.M."/>
        </authorList>
    </citation>
    <scope>FUNCTION</scope>
    <scope>TISSUE SPECIFICITY</scope>
    <scope>DISRUPTION PHENOTYPE</scope>
</reference>
<reference key="4">
    <citation type="journal article" date="2005" name="Curr. Biol.">
        <title>Roles of Drosophila DJ-1 in survival of dopaminergic neurons and oxidative stress.</title>
        <authorList>
            <person name="Menzies F.M."/>
            <person name="Yenisetti S.C."/>
            <person name="Min K.T."/>
        </authorList>
    </citation>
    <scope>TISSUE SPECIFICITY</scope>
    <scope>DEVELOPMENTAL STAGE</scope>
</reference>
<reference key="5">
    <citation type="journal article" date="2005" name="Gene">
        <title>Drosophila DJ-1 mutants show oxidative stress-sensitive locomotive dysfunction.</title>
        <authorList>
            <person name="Park J."/>
            <person name="Kim S.Y."/>
            <person name="Cha G.H."/>
            <person name="Lee S.B."/>
            <person name="Kim S."/>
            <person name="Chung J."/>
        </authorList>
    </citation>
    <scope>SUBCELLULAR LOCATION</scope>
    <scope>DEVELOPMENTAL STAGE</scope>
</reference>
<reference key="6">
    <citation type="journal article" date="2010" name="Proc. Natl. Acad. Sci. U.S.A.">
        <title>DJ-1 is critical for mitochondrial function and rescues PINK1 loss of function.</title>
        <authorList>
            <person name="Hao L.Y."/>
            <person name="Giasson B.I."/>
            <person name="Bonini N.M."/>
        </authorList>
    </citation>
    <scope>FUNCTION</scope>
    <scope>DISRUPTION PHENOTYPE</scope>
</reference>
<dbReference type="EMBL" id="AE013599">
    <property type="protein sequence ID" value="AAF58316.2"/>
    <property type="molecule type" value="Genomic_DNA"/>
</dbReference>
<dbReference type="RefSeq" id="NP_610916.1">
    <property type="nucleotide sequence ID" value="NM_137072.1"/>
</dbReference>
<dbReference type="SMR" id="A1Z9J4"/>
<dbReference type="FunCoup" id="A1Z9J4">
    <property type="interactions" value="713"/>
</dbReference>
<dbReference type="STRING" id="7227.FBpp0086741"/>
<dbReference type="MEROPS" id="C56.002"/>
<dbReference type="PaxDb" id="7227-FBpp0086741"/>
<dbReference type="EnsemblMetazoa" id="FBtr0087615">
    <property type="protein sequence ID" value="FBpp0086741"/>
    <property type="gene ID" value="FBgn0033885"/>
</dbReference>
<dbReference type="GeneID" id="36543"/>
<dbReference type="KEGG" id="dme:Dmel_CG6646"/>
<dbReference type="UCSC" id="CG6646-RA">
    <property type="organism name" value="d. melanogaster"/>
</dbReference>
<dbReference type="AGR" id="FB:FBgn0033885"/>
<dbReference type="CTD" id="36543"/>
<dbReference type="FlyBase" id="FBgn0033885">
    <property type="gene designation" value="DJ-1alpha"/>
</dbReference>
<dbReference type="VEuPathDB" id="VectorBase:FBgn0033885"/>
<dbReference type="eggNOG" id="KOG2764">
    <property type="taxonomic scope" value="Eukaryota"/>
</dbReference>
<dbReference type="GeneTree" id="ENSGT00390000001231"/>
<dbReference type="HOGENOM" id="CLU_000445_44_2_1"/>
<dbReference type="InParanoid" id="A1Z9J4"/>
<dbReference type="OMA" id="CSGDLWQ"/>
<dbReference type="OrthoDB" id="543156at2759"/>
<dbReference type="PhylomeDB" id="A1Z9J4"/>
<dbReference type="BioGRID-ORCS" id="36543">
    <property type="hits" value="0 hits in 1 CRISPR screen"/>
</dbReference>
<dbReference type="GenomeRNAi" id="36543"/>
<dbReference type="PRO" id="PR:A1Z9J4"/>
<dbReference type="Proteomes" id="UP000000803">
    <property type="component" value="Chromosome 2R"/>
</dbReference>
<dbReference type="Bgee" id="FBgn0033885">
    <property type="expression patterns" value="Expressed in alpha'/beta' Kenyon cell (Drosophila) in insect head and 27 other cell types or tissues"/>
</dbReference>
<dbReference type="ExpressionAtlas" id="A1Z9J4">
    <property type="expression patterns" value="baseline and differential"/>
</dbReference>
<dbReference type="GO" id="GO:0005737">
    <property type="term" value="C:cytoplasm"/>
    <property type="evidence" value="ECO:0000318"/>
    <property type="project" value="GO_Central"/>
</dbReference>
<dbReference type="GO" id="GO:0005739">
    <property type="term" value="C:mitochondrion"/>
    <property type="evidence" value="ECO:0000314"/>
    <property type="project" value="UniProtKB"/>
</dbReference>
<dbReference type="GO" id="GO:0005634">
    <property type="term" value="C:nucleus"/>
    <property type="evidence" value="ECO:0000318"/>
    <property type="project" value="GO_Central"/>
</dbReference>
<dbReference type="GO" id="GO:0051920">
    <property type="term" value="F:peroxiredoxin activity"/>
    <property type="evidence" value="ECO:0000250"/>
    <property type="project" value="FlyBase"/>
</dbReference>
<dbReference type="GO" id="GO:0036524">
    <property type="term" value="F:protein deglycase activity"/>
    <property type="evidence" value="ECO:0000250"/>
    <property type="project" value="FlyBase"/>
</dbReference>
<dbReference type="GO" id="GO:0042417">
    <property type="term" value="P:dopamine metabolic process"/>
    <property type="evidence" value="ECO:0000315"/>
    <property type="project" value="FlyBase"/>
</dbReference>
<dbReference type="GO" id="GO:0046295">
    <property type="term" value="P:glycolate biosynthetic process"/>
    <property type="evidence" value="ECO:0000318"/>
    <property type="project" value="GO_Central"/>
</dbReference>
<dbReference type="GO" id="GO:1903189">
    <property type="term" value="P:glyoxal metabolic process"/>
    <property type="evidence" value="ECO:0000318"/>
    <property type="project" value="GO_Central"/>
</dbReference>
<dbReference type="GO" id="GO:0042775">
    <property type="term" value="P:mitochondrial ATP synthesis coupled electron transport"/>
    <property type="evidence" value="ECO:0000316"/>
    <property type="project" value="FlyBase"/>
</dbReference>
<dbReference type="GO" id="GO:0070050">
    <property type="term" value="P:neuron cellular homeostasis"/>
    <property type="evidence" value="ECO:0000315"/>
    <property type="project" value="FlyBase"/>
</dbReference>
<dbReference type="GO" id="GO:1902958">
    <property type="term" value="P:positive regulation of mitochondrial electron transport, NADH to ubiquinone"/>
    <property type="evidence" value="ECO:0000250"/>
    <property type="project" value="FlyBase"/>
</dbReference>
<dbReference type="GO" id="GO:0051897">
    <property type="term" value="P:positive regulation of phosphatidylinositol 3-kinase/protein kinase B signal transduction"/>
    <property type="evidence" value="ECO:0000315"/>
    <property type="project" value="FlyBase"/>
</dbReference>
<dbReference type="GO" id="GO:0051881">
    <property type="term" value="P:regulation of mitochondrial membrane potential"/>
    <property type="evidence" value="ECO:0000250"/>
    <property type="project" value="FlyBase"/>
</dbReference>
<dbReference type="GO" id="GO:0006979">
    <property type="term" value="P:response to oxidative stress"/>
    <property type="evidence" value="ECO:0000314"/>
    <property type="project" value="FlyBase"/>
</dbReference>
<dbReference type="CDD" id="cd03135">
    <property type="entry name" value="GATase1_DJ-1"/>
    <property type="match status" value="1"/>
</dbReference>
<dbReference type="FunFam" id="3.40.50.880:FF:000022">
    <property type="entry name" value="protein deglycase DJ-1"/>
    <property type="match status" value="1"/>
</dbReference>
<dbReference type="Gene3D" id="3.40.50.880">
    <property type="match status" value="1"/>
</dbReference>
<dbReference type="InterPro" id="IPR029062">
    <property type="entry name" value="Class_I_gatase-like"/>
</dbReference>
<dbReference type="InterPro" id="IPR006287">
    <property type="entry name" value="DJ-1"/>
</dbReference>
<dbReference type="InterPro" id="IPR002818">
    <property type="entry name" value="DJ-1/PfpI"/>
</dbReference>
<dbReference type="InterPro" id="IPR050325">
    <property type="entry name" value="Prot/Nucl_acid_deglycase"/>
</dbReference>
<dbReference type="NCBIfam" id="TIGR01383">
    <property type="entry name" value="not_thiJ"/>
    <property type="match status" value="1"/>
</dbReference>
<dbReference type="PANTHER" id="PTHR48094:SF12">
    <property type="entry name" value="PARKINSON DISEASE PROTEIN 7 HOMOLOG"/>
    <property type="match status" value="1"/>
</dbReference>
<dbReference type="PANTHER" id="PTHR48094">
    <property type="entry name" value="PROTEIN/NUCLEIC ACID DEGLYCASE DJ-1-RELATED"/>
    <property type="match status" value="1"/>
</dbReference>
<dbReference type="Pfam" id="PF01965">
    <property type="entry name" value="DJ-1_PfpI"/>
    <property type="match status" value="1"/>
</dbReference>
<dbReference type="SUPFAM" id="SSF52317">
    <property type="entry name" value="Class I glutamine amidotransferase-like"/>
    <property type="match status" value="1"/>
</dbReference>
<keyword id="KW-0963">Cytoplasm</keyword>
<keyword id="KW-0496">Mitochondrion</keyword>
<keyword id="KW-0539">Nucleus</keyword>
<keyword id="KW-0558">Oxidation</keyword>
<keyword id="KW-1185">Reference proteome</keyword>
<comment type="function">
    <text evidence="1 2 3 4 6">Plays an important role in cell protection against oxidative stress and cell death acting as oxidative stress sensor (PubMed:16139213, PubMed:16139214, PubMed:20457924). Does not play a role in methylglyoxal detoxification (By similarity).</text>
</comment>
<comment type="subcellular location">
    <subcellularLocation>
        <location evidence="5">Cytoplasm</location>
    </subcellularLocation>
    <subcellularLocation>
        <location evidence="5">Nucleus</location>
    </subcellularLocation>
    <subcellularLocation>
        <location evidence="5">Mitochondrion</location>
    </subcellularLocation>
</comment>
<comment type="tissue specificity">
    <text evidence="3 4 5">Expressed in testis (at protein level).</text>
</comment>
<comment type="developmental stage">
    <text evidence="4">Expressed at high levels only in the later stages of development.</text>
</comment>
<comment type="disruption phenotype">
    <text evidence="3 6">Double knockouts for dj-1beta and dj-1alpha is viable but with reduced male fertility (PubMed:16139213, PubMed:20457924). Double knockouts for dj-1beta and dj-1alpha is more sensitive to chemical agents that induce oxidative stress (PubMed:16139213). Double knockouts for dj-1beta and dj-1alpha shows reduced lifespan and decreased spontaneous movement over time (PubMed:20457924). Double knockouts for dj-1beta and dj-1alpha spermatozoa are morphologically normal but immotile with abnormal vacuoles in the Nebenkern, abnormal mitochondria and aberrant separation of investment cones during sperm individualization (PubMed:20457924).</text>
</comment>
<organism>
    <name type="scientific">Drosophila melanogaster</name>
    <name type="common">Fruit fly</name>
    <dbReference type="NCBI Taxonomy" id="7227"/>
    <lineage>
        <taxon>Eukaryota</taxon>
        <taxon>Metazoa</taxon>
        <taxon>Ecdysozoa</taxon>
        <taxon>Arthropoda</taxon>
        <taxon>Hexapoda</taxon>
        <taxon>Insecta</taxon>
        <taxon>Pterygota</taxon>
        <taxon>Neoptera</taxon>
        <taxon>Endopterygota</taxon>
        <taxon>Diptera</taxon>
        <taxon>Brachycera</taxon>
        <taxon>Muscomorpha</taxon>
        <taxon>Ephydroidea</taxon>
        <taxon>Drosophilidae</taxon>
        <taxon>Drosophila</taxon>
        <taxon>Sophophora</taxon>
    </lineage>
</organism>
<proteinExistence type="evidence at protein level"/>
<name>DJ1A_DROME</name>
<evidence type="ECO:0000250" key="1">
    <source>
        <dbReference type="UniProtKB" id="Q99497"/>
    </source>
</evidence>
<evidence type="ECO:0000250" key="2">
    <source>
        <dbReference type="UniProtKB" id="Q9VA37"/>
    </source>
</evidence>
<evidence type="ECO:0000269" key="3">
    <source>
    </source>
</evidence>
<evidence type="ECO:0000269" key="4">
    <source>
    </source>
</evidence>
<evidence type="ECO:0000269" key="5">
    <source>
    </source>
</evidence>
<evidence type="ECO:0000269" key="6">
    <source>
    </source>
</evidence>
<evidence type="ECO:0000305" key="7"/>
<evidence type="ECO:0000312" key="8">
    <source>
        <dbReference type="FlyBase" id="FBgn0033885"/>
    </source>
</evidence>